<keyword id="KW-0210">Decarboxylase</keyword>
<keyword id="KW-0456">Lyase</keyword>
<keyword id="KW-0670">Pyruvate</keyword>
<feature type="chain" id="PRO_0000023338" description="Pyruvoyl-dependent arginine decarboxylase subunit beta" evidence="1">
    <location>
        <begin position="1"/>
        <end position="43"/>
    </location>
</feature>
<feature type="chain" id="PRO_0000023339" description="Pyruvoyl-dependent arginine decarboxylase subunit alpha" evidence="1">
    <location>
        <begin position="44"/>
        <end position="182"/>
    </location>
</feature>
<feature type="site" description="Cleavage (non-hydrolytic)" evidence="1">
    <location>
        <begin position="43"/>
        <end position="44"/>
    </location>
</feature>
<feature type="modified residue" description="Pyruvic acid (Ser)" evidence="1">
    <location>
        <position position="44"/>
    </location>
</feature>
<evidence type="ECO:0000255" key="1">
    <source>
        <dbReference type="HAMAP-Rule" id="MF_01404"/>
    </source>
</evidence>
<name>PDAD_THEVO</name>
<dbReference type="EC" id="4.1.1.19" evidence="1"/>
<dbReference type="EMBL" id="BA000011">
    <property type="protein sequence ID" value="BAB59915.1"/>
    <property type="molecule type" value="Genomic_DNA"/>
</dbReference>
<dbReference type="RefSeq" id="WP_010917020.1">
    <property type="nucleotide sequence ID" value="NC_002689.2"/>
</dbReference>
<dbReference type="SMR" id="Q97AN7"/>
<dbReference type="STRING" id="273116.gene:9381563"/>
<dbReference type="PaxDb" id="273116-14324989"/>
<dbReference type="GeneID" id="1441868"/>
<dbReference type="KEGG" id="tvo:TVG0778593"/>
<dbReference type="eggNOG" id="arCOG04490">
    <property type="taxonomic scope" value="Archaea"/>
</dbReference>
<dbReference type="HOGENOM" id="CLU_114389_0_0_2"/>
<dbReference type="OrthoDB" id="30748at2157"/>
<dbReference type="PhylomeDB" id="Q97AN7"/>
<dbReference type="Proteomes" id="UP000001017">
    <property type="component" value="Chromosome"/>
</dbReference>
<dbReference type="GO" id="GO:0008792">
    <property type="term" value="F:arginine decarboxylase activity"/>
    <property type="evidence" value="ECO:0007669"/>
    <property type="project" value="UniProtKB-UniRule"/>
</dbReference>
<dbReference type="GO" id="GO:0006527">
    <property type="term" value="P:arginine catabolic process"/>
    <property type="evidence" value="ECO:0007669"/>
    <property type="project" value="InterPro"/>
</dbReference>
<dbReference type="Gene3D" id="3.30.60.30">
    <property type="match status" value="1"/>
</dbReference>
<dbReference type="Gene3D" id="3.50.20.10">
    <property type="entry name" value="Pyruvoyl-Dependent Histidine Decarboxylase, subunit B"/>
    <property type="match status" value="1"/>
</dbReference>
<dbReference type="HAMAP" id="MF_01404">
    <property type="entry name" value="PvlArgDC"/>
    <property type="match status" value="1"/>
</dbReference>
<dbReference type="InterPro" id="IPR016104">
    <property type="entry name" value="Pyr-dep_his/arg-deCO2ase"/>
</dbReference>
<dbReference type="InterPro" id="IPR016105">
    <property type="entry name" value="Pyr-dep_his/arg-deCO2ase_sand"/>
</dbReference>
<dbReference type="InterPro" id="IPR002724">
    <property type="entry name" value="Pyruvoyl-dep_arg_deCO2ase"/>
</dbReference>
<dbReference type="NCBIfam" id="TIGR00286">
    <property type="entry name" value="pyruvoyl-dependent arginine decarboxylase"/>
    <property type="match status" value="1"/>
</dbReference>
<dbReference type="PANTHER" id="PTHR40438">
    <property type="entry name" value="PYRUVOYL-DEPENDENT ARGININE DECARBOXYLASE"/>
    <property type="match status" value="1"/>
</dbReference>
<dbReference type="PANTHER" id="PTHR40438:SF1">
    <property type="entry name" value="PYRUVOYL-DEPENDENT ARGININE DECARBOXYLASE"/>
    <property type="match status" value="1"/>
</dbReference>
<dbReference type="Pfam" id="PF01862">
    <property type="entry name" value="PvlArgDC"/>
    <property type="match status" value="1"/>
</dbReference>
<dbReference type="PIRSF" id="PIRSF005216">
    <property type="entry name" value="Pyruvoyl-dep_arg_deCO2ase"/>
    <property type="match status" value="1"/>
</dbReference>
<dbReference type="SFLD" id="SFLDG01170">
    <property type="entry name" value="Pyruvoyl-dependent_arginine_de"/>
    <property type="match status" value="1"/>
</dbReference>
<dbReference type="SFLD" id="SFLDS00055">
    <property type="entry name" value="Pyruvoyl-Dependent_Histidine/A"/>
    <property type="match status" value="1"/>
</dbReference>
<dbReference type="SUPFAM" id="SSF56271">
    <property type="entry name" value="Pyruvoyl-dependent histidine and arginine decarboxylases"/>
    <property type="match status" value="1"/>
</dbReference>
<organism>
    <name type="scientific">Thermoplasma volcanium (strain ATCC 51530 / DSM 4299 / JCM 9571 / NBRC 15438 / GSS1)</name>
    <dbReference type="NCBI Taxonomy" id="273116"/>
    <lineage>
        <taxon>Archaea</taxon>
        <taxon>Methanobacteriati</taxon>
        <taxon>Thermoplasmatota</taxon>
        <taxon>Thermoplasmata</taxon>
        <taxon>Thermoplasmatales</taxon>
        <taxon>Thermoplasmataceae</taxon>
        <taxon>Thermoplasma</taxon>
    </lineage>
</organism>
<gene>
    <name evidence="1" type="primary">pdaD</name>
    <name type="ordered locus">TV0773</name>
    <name type="ORF">TVG0778593</name>
</gene>
<sequence length="182" mass="19824">MSGFVPSEIFFTRGVGRGETQLESFEAALRDAGIAQFNLSSISSIFPPHAKMVSKEEGLKKLSPGQILFTVLARNTSNELNRMISAAIGYAIPRDKSKWGYLSEHHSFGETEKVAGSFAEKLAAEMLSSTFGSTSQLIYDKEKEEYVLEDKILTTGNISATAVVLSHDEWTTVVAAAVLIVE</sequence>
<protein>
    <recommendedName>
        <fullName evidence="1">Pyruvoyl-dependent arginine decarboxylase</fullName>
        <shortName evidence="1">PvlArgDC</shortName>
        <ecNumber evidence="1">4.1.1.19</ecNumber>
    </recommendedName>
    <component>
        <recommendedName>
            <fullName evidence="1">Pyruvoyl-dependent arginine decarboxylase subunit beta</fullName>
        </recommendedName>
    </component>
    <component>
        <recommendedName>
            <fullName evidence="1">Pyruvoyl-dependent arginine decarboxylase subunit alpha</fullName>
        </recommendedName>
    </component>
</protein>
<accession>Q97AN7</accession>
<proteinExistence type="inferred from homology"/>
<reference key="1">
    <citation type="journal article" date="2000" name="Proc. Natl. Acad. Sci. U.S.A.">
        <title>Archaeal adaptation to higher temperatures revealed by genomic sequence of Thermoplasma volcanium.</title>
        <authorList>
            <person name="Kawashima T."/>
            <person name="Amano N."/>
            <person name="Koike H."/>
            <person name="Makino S."/>
            <person name="Higuchi S."/>
            <person name="Kawashima-Ohya Y."/>
            <person name="Watanabe K."/>
            <person name="Yamazaki M."/>
            <person name="Kanehori K."/>
            <person name="Kawamoto T."/>
            <person name="Nunoshiba T."/>
            <person name="Yamamoto Y."/>
            <person name="Aramaki H."/>
            <person name="Makino K."/>
            <person name="Suzuki M."/>
        </authorList>
    </citation>
    <scope>NUCLEOTIDE SEQUENCE [LARGE SCALE GENOMIC DNA]</scope>
    <source>
        <strain>ATCC 51530 / DSM 4299 / JCM 9571 / NBRC 15438 / GSS1</strain>
    </source>
</reference>
<comment type="catalytic activity">
    <reaction evidence="1">
        <text>L-arginine + H(+) = agmatine + CO2</text>
        <dbReference type="Rhea" id="RHEA:17641"/>
        <dbReference type="ChEBI" id="CHEBI:15378"/>
        <dbReference type="ChEBI" id="CHEBI:16526"/>
        <dbReference type="ChEBI" id="CHEBI:32682"/>
        <dbReference type="ChEBI" id="CHEBI:58145"/>
        <dbReference type="EC" id="4.1.1.19"/>
    </reaction>
</comment>
<comment type="cofactor">
    <cofactor evidence="1">
        <name>pyruvate</name>
        <dbReference type="ChEBI" id="CHEBI:15361"/>
    </cofactor>
    <text evidence="1">Binds 1 pyruvoyl group covalently per subunit.</text>
</comment>
<comment type="similarity">
    <text evidence="1">Belongs to the PdaD family.</text>
</comment>